<keyword id="KW-0002">3D-structure</keyword>
<keyword id="KW-0020">Allergen</keyword>
<keyword id="KW-1015">Disulfide bond</keyword>
<keyword id="KW-0325">Glycoprotein</keyword>
<keyword id="KW-0964">Secreted</keyword>
<keyword id="KW-0732">Signal</keyword>
<evidence type="ECO:0000255" key="1"/>
<evidence type="ECO:0000255" key="2">
    <source>
        <dbReference type="PROSITE-ProRule" id="PRU00498"/>
    </source>
</evidence>
<evidence type="ECO:0000269" key="3">
    <source>
    </source>
</evidence>
<evidence type="ECO:0000269" key="4">
    <source>
    </source>
</evidence>
<evidence type="ECO:0000269" key="5">
    <source>
    </source>
</evidence>
<evidence type="ECO:0000269" key="6">
    <source>
    </source>
</evidence>
<evidence type="ECO:0000303" key="7">
    <source>
    </source>
</evidence>
<evidence type="ECO:0000303" key="8">
    <source>
    </source>
</evidence>
<evidence type="ECO:0000303" key="9">
    <source>
    </source>
</evidence>
<evidence type="ECO:0000305" key="10"/>
<evidence type="ECO:0000312" key="11">
    <source>
        <dbReference type="EMBL" id="AAV90690.1"/>
    </source>
</evidence>
<evidence type="ECO:0007744" key="12">
    <source>
        <dbReference type="PDB" id="7TDR"/>
    </source>
</evidence>
<evidence type="ECO:0007744" key="13">
    <source>
        <dbReference type="PDB" id="7TDS"/>
    </source>
</evidence>
<evidence type="ECO:0007829" key="14">
    <source>
        <dbReference type="PDB" id="7TDS"/>
    </source>
</evidence>
<name>34K2_AEDAL</name>
<feature type="signal peptide" evidence="1">
    <location>
        <begin position="1"/>
        <end position="20"/>
    </location>
</feature>
<feature type="chain" id="PRO_5004259122" description="Labrum-interacting protein from saliva LIPS-2" evidence="1">
    <location>
        <begin position="21"/>
        <end position="322"/>
    </location>
</feature>
<feature type="glycosylation site" description="N-linked (GlcNAc...) asparagine" evidence="2">
    <location>
        <position position="168"/>
    </location>
</feature>
<feature type="glycosylation site" description="N-linked (GlcNAc...) asparagine" evidence="2">
    <location>
        <position position="175"/>
    </location>
</feature>
<feature type="disulfide bond" evidence="5 12 13">
    <location>
        <begin position="27"/>
        <end position="62"/>
    </location>
</feature>
<feature type="disulfide bond" evidence="5 12 13">
    <location>
        <begin position="249"/>
        <end position="295"/>
    </location>
</feature>
<feature type="mutagenesis site" description="Reduces the interaction with cuticular protein Cp19." evidence="5">
    <original>R</original>
    <variation>S</variation>
    <location>
        <position position="38"/>
    </location>
</feature>
<feature type="mutagenesis site" description="No significant effect on the interaction with cuticular protein Cp19." evidence="5">
    <original>SR</original>
    <variation>AS</variation>
    <location>
        <begin position="151"/>
        <end position="152"/>
    </location>
</feature>
<feature type="helix" evidence="14">
    <location>
        <begin position="31"/>
        <end position="43"/>
    </location>
</feature>
<feature type="strand" evidence="14">
    <location>
        <begin position="46"/>
        <end position="48"/>
    </location>
</feature>
<feature type="helix" evidence="14">
    <location>
        <begin position="56"/>
        <end position="61"/>
    </location>
</feature>
<feature type="helix" evidence="14">
    <location>
        <begin position="64"/>
        <end position="84"/>
    </location>
</feature>
<feature type="helix" evidence="14">
    <location>
        <begin position="89"/>
        <end position="107"/>
    </location>
</feature>
<feature type="helix" evidence="14">
    <location>
        <begin position="110"/>
        <end position="113"/>
    </location>
</feature>
<feature type="helix" evidence="14">
    <location>
        <begin position="118"/>
        <end position="120"/>
    </location>
</feature>
<feature type="helix" evidence="14">
    <location>
        <begin position="124"/>
        <end position="126"/>
    </location>
</feature>
<feature type="helix" evidence="14">
    <location>
        <begin position="128"/>
        <end position="164"/>
    </location>
</feature>
<feature type="helix" evidence="14">
    <location>
        <begin position="170"/>
        <end position="173"/>
    </location>
</feature>
<feature type="helix" evidence="14">
    <location>
        <begin position="178"/>
        <end position="192"/>
    </location>
</feature>
<feature type="helix" evidence="14">
    <location>
        <begin position="196"/>
        <end position="209"/>
    </location>
</feature>
<feature type="helix" evidence="14">
    <location>
        <begin position="212"/>
        <end position="228"/>
    </location>
</feature>
<feature type="helix" evidence="14">
    <location>
        <begin position="234"/>
        <end position="251"/>
    </location>
</feature>
<feature type="helix" evidence="14">
    <location>
        <begin position="255"/>
        <end position="263"/>
    </location>
</feature>
<feature type="helix" evidence="14">
    <location>
        <begin position="265"/>
        <end position="275"/>
    </location>
</feature>
<feature type="helix" evidence="14">
    <location>
        <begin position="282"/>
        <end position="292"/>
    </location>
</feature>
<feature type="helix" evidence="14">
    <location>
        <begin position="299"/>
        <end position="305"/>
    </location>
</feature>
<feature type="helix" evidence="14">
    <location>
        <begin position="307"/>
        <end position="313"/>
    </location>
</feature>
<accession>Q5MIU2</accession>
<organism evidence="11">
    <name type="scientific">Aedes albopictus</name>
    <name type="common">Asian tiger mosquito</name>
    <name type="synonym">Stegomyia albopicta</name>
    <dbReference type="NCBI Taxonomy" id="7160"/>
    <lineage>
        <taxon>Eukaryota</taxon>
        <taxon>Metazoa</taxon>
        <taxon>Ecdysozoa</taxon>
        <taxon>Arthropoda</taxon>
        <taxon>Hexapoda</taxon>
        <taxon>Insecta</taxon>
        <taxon>Pterygota</taxon>
        <taxon>Neoptera</taxon>
        <taxon>Endopterygota</taxon>
        <taxon>Diptera</taxon>
        <taxon>Nematocera</taxon>
        <taxon>Culicoidea</taxon>
        <taxon>Culicidae</taxon>
        <taxon>Culicinae</taxon>
        <taxon>Aedini</taxon>
        <taxon>Aedes</taxon>
        <taxon>Stegomyia</taxon>
    </lineage>
</organism>
<reference evidence="11" key="1">
    <citation type="journal article" date="2007" name="Insect Biochem. Mol. Biol.">
        <title>An insight into the sialome of the adult female mosquito Aedes albopictus.</title>
        <authorList>
            <person name="Arca B."/>
            <person name="Lombardo F."/>
            <person name="Francischetti I.M."/>
            <person name="Pham V.M."/>
            <person name="Mestres-Simon M."/>
            <person name="Andersen J.F."/>
            <person name="Ribeiro J.M."/>
        </authorList>
    </citation>
    <scope>NUCLEOTIDE SEQUENCE [LARGE SCALE MRNA]</scope>
    <source>
        <tissue evidence="11">Salivary gland</tissue>
    </source>
</reference>
<reference evidence="10" key="2">
    <citation type="journal article" date="2013" name="Insect Mol. Biol.">
        <title>First screening of Aedes albopictus immunogenic salivary proteins.</title>
        <authorList>
            <person name="Doucoure S."/>
            <person name="Cornelie S."/>
            <person name="Patramool S."/>
            <person name="Mouchet F."/>
            <person name="Demettre E."/>
            <person name="Seveno M."/>
            <person name="Dehecq J.S."/>
            <person name="Rutee H."/>
            <person name="Herve J.P."/>
            <person name="Favier F."/>
            <person name="Misse D."/>
            <person name="Gasque P."/>
            <person name="Remoue F."/>
        </authorList>
    </citation>
    <scope>IDENTIFICATION BY MASS SPECTROMETRY</scope>
    <scope>TISSUE SPECIFICITY</scope>
</reference>
<reference evidence="10" key="3">
    <citation type="journal article" date="2022" name="Bioengineered">
        <title>Aedes albopictus salivary proteins adenosine deaminase and 34k2 interact with human mast cell specific proteases tryptase and chymase.</title>
        <authorList>
            <person name="Li Z."/>
            <person name="Ji C."/>
            <person name="Cheng J."/>
            <person name="Aabrink M."/>
            <person name="Shen T."/>
            <person name="Kuang X."/>
            <person name="Shang Z."/>
            <person name="Wu J."/>
        </authorList>
    </citation>
    <scope>FUNCTION</scope>
    <scope>PROTEOLYTIC CLEAVAGE</scope>
</reference>
<reference evidence="12 13" key="4">
    <citation type="journal article" date="2022" name="Curr. Biol.">
        <title>A salivary factor binds a cuticular protein and modulates biting by inducing morphological changes in the mosquito labrum.</title>
        <authorList>
            <person name="Arnoldi I."/>
            <person name="Mancini G."/>
            <person name="Fumagalli M."/>
            <person name="Gastaldi D."/>
            <person name="D'Andrea L."/>
            <person name="Bandi C."/>
            <person name="Di Venere M."/>
            <person name="Iadarola P."/>
            <person name="Forneris F."/>
            <person name="Gabrieli P."/>
        </authorList>
    </citation>
    <scope>X-RAY CRYSTALLOGRAPHY (2.20 ANGSTROMS) OF 21-322</scope>
    <scope>FUNCTION</scope>
    <scope>SUBUNIT</scope>
    <scope>INTERACTION WITH CUTICULAR PROTEIN CP19</scope>
    <scope>TISSUE SPECIFICITY</scope>
    <scope>GLYCOSYLATION</scope>
    <scope>DISRUPTION PHENOTYPE</scope>
    <scope>DISULFIDE BONDS</scope>
    <scope>MUTAGENESIS OF ARG-38 AND 151-SER-ARG-152</scope>
    <source>
        <strain evidence="8">RIMINI</strain>
    </source>
</reference>
<reference evidence="10" key="5">
    <citation type="journal article" date="2023" name="World Allergy Organ. J.">
        <title>IgE response to Aed al 13 and Aed al 14 recombinant allergens from Aedes albopictus saliva in humans.</title>
        <authorList>
            <person name="Arnoldi I."/>
            <person name="Villa M."/>
            <person name="Mancini G."/>
            <person name="Varotto-Boccazzi I."/>
            <person name="Yacoub M.R."/>
            <person name="Asperti C."/>
            <person name="Mascheri A."/>
            <person name="Casiraghi S."/>
            <person name="Epis S."/>
            <person name="Bandi C."/>
            <person name="Dagna L."/>
            <person name="Forneris F."/>
            <person name="Gabrieli P."/>
        </authorList>
    </citation>
    <scope>ALLERGEN</scope>
</reference>
<proteinExistence type="evidence at protein level"/>
<comment type="function">
    <text evidence="4 5">Salivary protein that promotes mosquito blood feeding on the vertebrate host by inducing morphological changes in the mosquito labrum (PubMed:35835123). Interacts with the mosquito labrum end tip and triggers salivation and probing (PubMed:35835123). Modulates enzymatic activities of human tryptase and chymase (PubMed:35746853).</text>
</comment>
<comment type="subunit">
    <text evidence="5">Monomer in solution (PubMed:35835123). Interacts (via the N-terminal domain) with cuticular protein Cp19 (via the C-terminus) (PubMed:35835123).</text>
</comment>
<comment type="subcellular location">
    <subcellularLocation>
        <location evidence="10">Secreted</location>
    </subcellularLocation>
</comment>
<comment type="tissue specificity">
    <text evidence="3 5">Female salivary gland (at protein level) (PubMed:23714164). Female saliva (at protein level) (PubMed:35835123).</text>
</comment>
<comment type="PTM">
    <text evidence="4">Proteolytically cleaved by human mast cell tryptase and chymase.</text>
</comment>
<comment type="PTM">
    <text evidence="5">Glycosylated.</text>
</comment>
<comment type="disruption phenotype">
    <text evidence="5">RNAi-mediated knockdown results in prolonged intradermal probing prior blood engorgement when mosquitoes are fed on human host (PubMed:35835123). No significant effects on probing and feeding time when mosquitoes are fed on membrane-covered heparinized blood (PubMed:35835123).</text>
</comment>
<comment type="allergen">
    <text evidence="6">Causes an allergic reaction in human (PubMed:37965096). Binds to IgE (PubMed:37965096).</text>
</comment>
<comment type="miscellaneous">
    <text evidence="3">Antibodies against the protein are found in the serum of individuals exposed to Aedes albopictus bites.</text>
</comment>
<sequence>MKTSLPIVVLLTAVISGVHPNPTPKSCTVSEEDLTTIRNAIQKASRASLDDVNLDEDLIAKCPLLKTITASLKSVASEIATLKDTGISEEQVDELKQSYEQQVNEIVKSRDIFEKQSGGDVMKEQGAMINRMTELQVQVAQLQQQIGEQTSRMYDDMAELIFQRLAMNSTDSIRNYTAHMMEQKLHTLMTKLETNYRIFLGALRYLDHLGDQPLIDKVFDGILKRLDEMSLETNKERENGKYVLVNLLCWTVNNRFLTEKYRKKQLELFRIALKFYPKTGNKEANEADIRGRQFCDANFPVNVITWFAVSRAAEGWGLRGTL</sequence>
<dbReference type="EMBL" id="AY826118">
    <property type="protein sequence ID" value="AAV90690.1"/>
    <property type="molecule type" value="mRNA"/>
</dbReference>
<dbReference type="PDB" id="7TDR">
    <property type="method" value="X-ray"/>
    <property type="resolution" value="2.28 A"/>
    <property type="chains" value="A=21-322"/>
</dbReference>
<dbReference type="PDB" id="7TDS">
    <property type="method" value="X-ray"/>
    <property type="resolution" value="2.20 A"/>
    <property type="chains" value="A=21-322"/>
</dbReference>
<dbReference type="PDBsum" id="7TDR"/>
<dbReference type="PDBsum" id="7TDS"/>
<dbReference type="SASBDB" id="Q5MIU2"/>
<dbReference type="SMR" id="Q5MIU2"/>
<dbReference type="VEuPathDB" id="VectorBase:AALC636_021824"/>
<dbReference type="VEuPathDB" id="VectorBase:AALF017486"/>
<dbReference type="VEuPathDB" id="VectorBase:AALFPA_049280"/>
<dbReference type="Proteomes" id="UP000069940">
    <property type="component" value="Unplaced"/>
</dbReference>
<dbReference type="GO" id="GO:0005576">
    <property type="term" value="C:extracellular region"/>
    <property type="evidence" value="ECO:0007669"/>
    <property type="project" value="UniProtKB-SubCell"/>
</dbReference>
<protein>
    <recommendedName>
        <fullName evidence="8">Labrum-interacting protein from saliva LIPS-2</fullName>
        <shortName evidence="8">LIPS-2</shortName>
        <shortName evidence="8">albLIPS-2</shortName>
    </recommendedName>
    <alternativeName>
        <fullName evidence="11">Similar to Aedes aegypti 34 kDa salivary secreted protein 34k-2</fullName>
        <shortName evidence="7">al34k2</shortName>
    </alternativeName>
    <allergenName evidence="9">Aed al 14</allergenName>
</protein>